<protein>
    <recommendedName>
        <fullName>Poly(rC)-binding protein 1</fullName>
    </recommendedName>
    <alternativeName>
        <fullName>Alpha-CP1</fullName>
    </alternativeName>
</protein>
<reference key="1">
    <citation type="journal article" date="2005" name="BMC Genomics">
        <title>Characterization of 954 bovine full-CDS cDNA sequences.</title>
        <authorList>
            <person name="Harhay G.P."/>
            <person name="Sonstegard T.S."/>
            <person name="Keele J.W."/>
            <person name="Heaton M.P."/>
            <person name="Clawson M.L."/>
            <person name="Snelling W.M."/>
            <person name="Wiedmann R.T."/>
            <person name="Van Tassell C.P."/>
            <person name="Smith T.P.L."/>
        </authorList>
    </citation>
    <scope>NUCLEOTIDE SEQUENCE [LARGE SCALE MRNA]</scope>
</reference>
<name>PCBP1_BOVIN</name>
<organism>
    <name type="scientific">Bos taurus</name>
    <name type="common">Bovine</name>
    <dbReference type="NCBI Taxonomy" id="9913"/>
    <lineage>
        <taxon>Eukaryota</taxon>
        <taxon>Metazoa</taxon>
        <taxon>Chordata</taxon>
        <taxon>Craniata</taxon>
        <taxon>Vertebrata</taxon>
        <taxon>Euteleostomi</taxon>
        <taxon>Mammalia</taxon>
        <taxon>Eutheria</taxon>
        <taxon>Laurasiatheria</taxon>
        <taxon>Artiodactyla</taxon>
        <taxon>Ruminantia</taxon>
        <taxon>Pecora</taxon>
        <taxon>Bovidae</taxon>
        <taxon>Bovinae</taxon>
        <taxon>Bos</taxon>
    </lineage>
</organism>
<feature type="chain" id="PRO_0000239138" description="Poly(rC)-binding protein 1">
    <location>
        <begin position="1"/>
        <end position="356"/>
    </location>
</feature>
<feature type="domain" description="KH 1" evidence="3">
    <location>
        <begin position="13"/>
        <end position="75"/>
    </location>
</feature>
<feature type="domain" description="KH 2" evidence="3">
    <location>
        <begin position="97"/>
        <end position="162"/>
    </location>
</feature>
<feature type="domain" description="KH 3" evidence="3">
    <location>
        <begin position="279"/>
        <end position="343"/>
    </location>
</feature>
<feature type="modified residue" description="N-acetylmethionine" evidence="2">
    <location>
        <position position="1"/>
    </location>
</feature>
<feature type="modified residue" description="Phosphoserine" evidence="2">
    <location>
        <position position="173"/>
    </location>
</feature>
<feature type="modified residue" description="Phosphoserine" evidence="1">
    <location>
        <position position="189"/>
    </location>
</feature>
<feature type="modified residue" description="Phosphoserine" evidence="2">
    <location>
        <position position="190"/>
    </location>
</feature>
<feature type="modified residue" description="Phosphoserine" evidence="2">
    <location>
        <position position="246"/>
    </location>
</feature>
<feature type="modified residue" description="Phosphoserine" evidence="2">
    <location>
        <position position="264"/>
    </location>
</feature>
<feature type="modified residue" description="Phosphoserine" evidence="2">
    <location>
        <position position="273"/>
    </location>
</feature>
<feature type="cross-link" description="Glycyl lysine isopeptide (Lys-Gly) (interchain with G-Cter in SUMO2)" evidence="2">
    <location>
        <position position="115"/>
    </location>
</feature>
<gene>
    <name type="primary">PCBP1</name>
</gene>
<keyword id="KW-0007">Acetylation</keyword>
<keyword id="KW-0963">Cytoplasm</keyword>
<keyword id="KW-0238">DNA-binding</keyword>
<keyword id="KW-1017">Isopeptide bond</keyword>
<keyword id="KW-0539">Nucleus</keyword>
<keyword id="KW-0597">Phosphoprotein</keyword>
<keyword id="KW-1185">Reference proteome</keyword>
<keyword id="KW-0677">Repeat</keyword>
<keyword id="KW-0687">Ribonucleoprotein</keyword>
<keyword id="KW-0694">RNA-binding</keyword>
<keyword id="KW-0832">Ubl conjugation</keyword>
<sequence>MDAGVTESGLNVTLTIRLLMHGKEVGSIIGKKGESVKRIREESGARINISEGNCPERIITLTGPTNAIFKAFAMIIDKLEEDINSSMTNSTAASRPPVTLRLVVPATQCGSLIGKGGCKIKEIRESTGAQVQVAGDMLPNSTERAITIAGVPQSVTECVKQICLVMLETLSQSPQGRVMTIPYQPMPASSPVICAGGQDRCSDAAGYPHATHDLEGPPLDAYSIQGQHTISPLDLAKLNQVARQQSHFAMMHGGTGFAGIDSSSPEVKGYWASLDASTQTTHELTIPNNLIGCIIGRQGANINEIRQMSGAQIKIANPVEGSSGRQVTITGSAASISLAQYLINARLSSEKGMGCS</sequence>
<evidence type="ECO:0000250" key="1">
    <source>
        <dbReference type="UniProtKB" id="P60335"/>
    </source>
</evidence>
<evidence type="ECO:0000250" key="2">
    <source>
        <dbReference type="UniProtKB" id="Q15365"/>
    </source>
</evidence>
<evidence type="ECO:0000255" key="3">
    <source>
        <dbReference type="PROSITE-ProRule" id="PRU00117"/>
    </source>
</evidence>
<proteinExistence type="evidence at transcript level"/>
<comment type="function">
    <text evidence="1 2">Single-stranded nucleic acid binding protein that binds preferentially to oligo dC (By similarity). Together with PCBP2, required for erythropoiesis, possibly by regulating mRNA splicing (By similarity).</text>
</comment>
<comment type="subcellular location">
    <subcellularLocation>
        <location evidence="2">Nucleus</location>
    </subcellularLocation>
    <subcellularLocation>
        <location evidence="2">Cytoplasm</location>
    </subcellularLocation>
    <text evidence="2">Loosely bound in the nucleus. May shuttle between the nucleus and the cytoplasm.</text>
</comment>
<comment type="PTM">
    <text evidence="2">Phosphorylated; lowers poly(rC)-binding activity.</text>
</comment>
<dbReference type="EMBL" id="BT021017">
    <property type="protein sequence ID" value="AAX09034.1"/>
    <property type="molecule type" value="mRNA"/>
</dbReference>
<dbReference type="RefSeq" id="NP_001015565.1">
    <property type="nucleotide sequence ID" value="NM_001015565.1"/>
</dbReference>
<dbReference type="SMR" id="Q5E9A3"/>
<dbReference type="FunCoup" id="Q5E9A3">
    <property type="interactions" value="1906"/>
</dbReference>
<dbReference type="IntAct" id="Q5E9A3">
    <property type="interactions" value="1"/>
</dbReference>
<dbReference type="MINT" id="Q5E9A3"/>
<dbReference type="STRING" id="9913.ENSBTAP00000049383"/>
<dbReference type="PaxDb" id="9913-ENSBTAP00000049383"/>
<dbReference type="PeptideAtlas" id="Q5E9A3"/>
<dbReference type="Ensembl" id="ENSBTAT00000094697.1">
    <property type="protein sequence ID" value="ENSBTAP00000087597.1"/>
    <property type="gene ID" value="ENSBTAG00000008985.6"/>
</dbReference>
<dbReference type="Ensembl" id="ENSBTAT00000131639.1">
    <property type="protein sequence ID" value="ENSBTAP00000076512.1"/>
    <property type="gene ID" value="ENSBTAG00000008985.6"/>
</dbReference>
<dbReference type="GeneID" id="509917"/>
<dbReference type="KEGG" id="bta:509917"/>
<dbReference type="CTD" id="5093"/>
<dbReference type="eggNOG" id="KOG2190">
    <property type="taxonomic scope" value="Eukaryota"/>
</dbReference>
<dbReference type="GeneTree" id="ENSGT00940000161582"/>
<dbReference type="HOGENOM" id="CLU_022670_0_1_1"/>
<dbReference type="InParanoid" id="Q5E9A3"/>
<dbReference type="OrthoDB" id="442947at2759"/>
<dbReference type="TreeFam" id="TF318292"/>
<dbReference type="CD-CODE" id="D7FE2080">
    <property type="entry name" value="Nucleolus"/>
</dbReference>
<dbReference type="Proteomes" id="UP000009136">
    <property type="component" value="Chromosome 11"/>
</dbReference>
<dbReference type="GO" id="GO:0005737">
    <property type="term" value="C:cytoplasm"/>
    <property type="evidence" value="ECO:0000318"/>
    <property type="project" value="GO_Central"/>
</dbReference>
<dbReference type="GO" id="GO:0036464">
    <property type="term" value="C:cytoplasmic ribonucleoprotein granule"/>
    <property type="evidence" value="ECO:0007669"/>
    <property type="project" value="Ensembl"/>
</dbReference>
<dbReference type="GO" id="GO:0005829">
    <property type="term" value="C:cytosol"/>
    <property type="evidence" value="ECO:0007669"/>
    <property type="project" value="Ensembl"/>
</dbReference>
<dbReference type="GO" id="GO:0016607">
    <property type="term" value="C:nuclear speck"/>
    <property type="evidence" value="ECO:0007669"/>
    <property type="project" value="Ensembl"/>
</dbReference>
<dbReference type="GO" id="GO:0005654">
    <property type="term" value="C:nucleoplasm"/>
    <property type="evidence" value="ECO:0000318"/>
    <property type="project" value="GO_Central"/>
</dbReference>
<dbReference type="GO" id="GO:0005634">
    <property type="term" value="C:nucleus"/>
    <property type="evidence" value="ECO:0000318"/>
    <property type="project" value="GO_Central"/>
</dbReference>
<dbReference type="GO" id="GO:1990904">
    <property type="term" value="C:ribonucleoprotein complex"/>
    <property type="evidence" value="ECO:0007669"/>
    <property type="project" value="UniProtKB-KW"/>
</dbReference>
<dbReference type="GO" id="GO:0000981">
    <property type="term" value="F:DNA-binding transcription factor activity, RNA polymerase II-specific"/>
    <property type="evidence" value="ECO:0007669"/>
    <property type="project" value="Ensembl"/>
</dbReference>
<dbReference type="GO" id="GO:0003730">
    <property type="term" value="F:mRNA 3'-UTR binding"/>
    <property type="evidence" value="ECO:0000250"/>
    <property type="project" value="UniProtKB"/>
</dbReference>
<dbReference type="GO" id="GO:0003729">
    <property type="term" value="F:mRNA binding"/>
    <property type="evidence" value="ECO:0000318"/>
    <property type="project" value="GO_Central"/>
</dbReference>
<dbReference type="GO" id="GO:0003723">
    <property type="term" value="F:RNA binding"/>
    <property type="evidence" value="ECO:0000250"/>
    <property type="project" value="AgBase"/>
</dbReference>
<dbReference type="GO" id="GO:0098847">
    <property type="term" value="F:sequence-specific single stranded DNA binding"/>
    <property type="evidence" value="ECO:0007669"/>
    <property type="project" value="Ensembl"/>
</dbReference>
<dbReference type="GO" id="GO:0003697">
    <property type="term" value="F:single-stranded DNA binding"/>
    <property type="evidence" value="ECO:0000250"/>
    <property type="project" value="AgBase"/>
</dbReference>
<dbReference type="GO" id="GO:0045944">
    <property type="term" value="P:positive regulation of transcription by RNA polymerase II"/>
    <property type="evidence" value="ECO:0000318"/>
    <property type="project" value="GO_Central"/>
</dbReference>
<dbReference type="GO" id="GO:0039694">
    <property type="term" value="P:viral RNA genome replication"/>
    <property type="evidence" value="ECO:0007669"/>
    <property type="project" value="Ensembl"/>
</dbReference>
<dbReference type="CDD" id="cd22515">
    <property type="entry name" value="KH-I_PCBP1_2_rpt1"/>
    <property type="match status" value="1"/>
</dbReference>
<dbReference type="CDD" id="cd22518">
    <property type="entry name" value="KH-I_PCBP1_2_rpt2"/>
    <property type="match status" value="1"/>
</dbReference>
<dbReference type="CDD" id="cd22521">
    <property type="entry name" value="KH-I_PCBP1_2_rpt3"/>
    <property type="match status" value="1"/>
</dbReference>
<dbReference type="FunFam" id="3.30.1370.10:FF:000002">
    <property type="entry name" value="poly(RC)-binding protein 2 isoform X1"/>
    <property type="match status" value="1"/>
</dbReference>
<dbReference type="FunFam" id="3.30.1370.10:FF:000003">
    <property type="entry name" value="poly(RC)-binding protein 2 isoform X1"/>
    <property type="match status" value="1"/>
</dbReference>
<dbReference type="FunFam" id="3.30.1370.10:FF:000005">
    <property type="entry name" value="poly(RC)-binding protein 2 isoform X1"/>
    <property type="match status" value="1"/>
</dbReference>
<dbReference type="Gene3D" id="3.30.1370.10">
    <property type="entry name" value="K Homology domain, type 1"/>
    <property type="match status" value="3"/>
</dbReference>
<dbReference type="InterPro" id="IPR004087">
    <property type="entry name" value="KH_dom"/>
</dbReference>
<dbReference type="InterPro" id="IPR004088">
    <property type="entry name" value="KH_dom_type_1"/>
</dbReference>
<dbReference type="InterPro" id="IPR036612">
    <property type="entry name" value="KH_dom_type_1_sf"/>
</dbReference>
<dbReference type="PANTHER" id="PTHR10288">
    <property type="entry name" value="KH DOMAIN CONTAINING RNA BINDING PROTEIN"/>
    <property type="match status" value="1"/>
</dbReference>
<dbReference type="Pfam" id="PF00013">
    <property type="entry name" value="KH_1"/>
    <property type="match status" value="3"/>
</dbReference>
<dbReference type="SMART" id="SM00322">
    <property type="entry name" value="KH"/>
    <property type="match status" value="3"/>
</dbReference>
<dbReference type="SUPFAM" id="SSF54791">
    <property type="entry name" value="Eukaryotic type KH-domain (KH-domain type I)"/>
    <property type="match status" value="3"/>
</dbReference>
<dbReference type="PROSITE" id="PS50084">
    <property type="entry name" value="KH_TYPE_1"/>
    <property type="match status" value="3"/>
</dbReference>
<accession>Q5E9A3</accession>